<reference key="1">
    <citation type="submission" date="2002-07" db="EMBL/GenBank/DDBJ databases">
        <title>Parsing out signal and noise for seed-plant phylogenetic inference.</title>
        <authorList>
            <person name="Graham S.W."/>
            <person name="Rai H.S."/>
            <person name="Ikegami K."/>
            <person name="Reeves P.A."/>
            <person name="Olmstead R.G."/>
        </authorList>
    </citation>
    <scope>NUCLEOTIDE SEQUENCE [GENOMIC DNA]</scope>
</reference>
<evidence type="ECO:0000255" key="1">
    <source>
        <dbReference type="HAMAP-Rule" id="MF_00293"/>
    </source>
</evidence>
<feature type="chain" id="PRO_0000207950" description="Protein PsbN">
    <location>
        <begin position="1"/>
        <end position="43"/>
    </location>
</feature>
<feature type="transmembrane region" description="Helical" evidence="1">
    <location>
        <begin position="5"/>
        <end position="27"/>
    </location>
</feature>
<gene>
    <name evidence="1" type="primary">psbN</name>
</gene>
<sequence>METATLVAISISGSLVSFTGYALYTAFGQPSQQLRDPFEEHGD</sequence>
<geneLocation type="chloroplast"/>
<dbReference type="EMBL" id="AF528911">
    <property type="protein sequence ID" value="AAQ09430.1"/>
    <property type="molecule type" value="Genomic_DNA"/>
</dbReference>
<dbReference type="RefSeq" id="YP_009538999.1">
    <property type="nucleotide sequence ID" value="NC_039933.1"/>
</dbReference>
<dbReference type="SMR" id="Q6EYE3"/>
<dbReference type="GeneID" id="38459131"/>
<dbReference type="GO" id="GO:0009535">
    <property type="term" value="C:chloroplast thylakoid membrane"/>
    <property type="evidence" value="ECO:0007669"/>
    <property type="project" value="UniProtKB-SubCell"/>
</dbReference>
<dbReference type="GO" id="GO:0015979">
    <property type="term" value="P:photosynthesis"/>
    <property type="evidence" value="ECO:0007669"/>
    <property type="project" value="InterPro"/>
</dbReference>
<dbReference type="HAMAP" id="MF_00293">
    <property type="entry name" value="PSII_PsbN"/>
    <property type="match status" value="1"/>
</dbReference>
<dbReference type="InterPro" id="IPR003398">
    <property type="entry name" value="PSII_PsbN"/>
</dbReference>
<dbReference type="PANTHER" id="PTHR35326">
    <property type="entry name" value="PROTEIN PSBN"/>
    <property type="match status" value="1"/>
</dbReference>
<dbReference type="PANTHER" id="PTHR35326:SF3">
    <property type="entry name" value="PROTEIN PSBN"/>
    <property type="match status" value="1"/>
</dbReference>
<dbReference type="Pfam" id="PF02468">
    <property type="entry name" value="PsbN"/>
    <property type="match status" value="1"/>
</dbReference>
<protein>
    <recommendedName>
        <fullName evidence="1">Protein PsbN</fullName>
    </recommendedName>
</protein>
<name>PSBN_SARHE</name>
<accession>Q6EYE3</accession>
<organism>
    <name type="scientific">Saruma henryi</name>
    <name type="common">Upright wild ginger</name>
    <dbReference type="NCBI Taxonomy" id="13258"/>
    <lineage>
        <taxon>Eukaryota</taxon>
        <taxon>Viridiplantae</taxon>
        <taxon>Streptophyta</taxon>
        <taxon>Embryophyta</taxon>
        <taxon>Tracheophyta</taxon>
        <taxon>Spermatophyta</taxon>
        <taxon>Magnoliopsida</taxon>
        <taxon>Magnoliidae</taxon>
        <taxon>Piperales</taxon>
        <taxon>Asaraceae</taxon>
        <taxon>Saruma</taxon>
    </lineage>
</organism>
<proteinExistence type="inferred from homology"/>
<comment type="function">
    <text evidence="1">May play a role in photosystem I and II biogenesis.</text>
</comment>
<comment type="subcellular location">
    <subcellularLocation>
        <location evidence="1">Plastid</location>
        <location evidence="1">Chloroplast thylakoid membrane</location>
        <topology evidence="1">Single-pass membrane protein</topology>
    </subcellularLocation>
</comment>
<comment type="similarity">
    <text evidence="1">Belongs to the PsbN family.</text>
</comment>
<comment type="caution">
    <text evidence="1">Originally thought to be a component of PSII; based on experiments in Synechocystis, N.tabacum and barley, and its absence from PSII in T.elongatus and T.vulcanus, this is probably not true.</text>
</comment>
<keyword id="KW-0150">Chloroplast</keyword>
<keyword id="KW-0472">Membrane</keyword>
<keyword id="KW-0934">Plastid</keyword>
<keyword id="KW-0793">Thylakoid</keyword>
<keyword id="KW-0812">Transmembrane</keyword>
<keyword id="KW-1133">Transmembrane helix</keyword>